<protein>
    <recommendedName>
        <fullName>Steroid 21-hydroxylase</fullName>
        <ecNumber evidence="1">1.14.14.16</ecNumber>
    </recommendedName>
    <alternativeName>
        <fullName>21-OHase</fullName>
    </alternativeName>
    <alternativeName>
        <fullName>Cytochrome P-450c21</fullName>
    </alternativeName>
    <alternativeName>
        <fullName>Cytochrome P450 21</fullName>
    </alternativeName>
    <alternativeName>
        <fullName>Cytochrome P450 XXI</fullName>
    </alternativeName>
    <alternativeName>
        <fullName>Cytochrome P450-C21</fullName>
    </alternativeName>
</protein>
<comment type="function">
    <text evidence="1">Specifically catalyzes the 21-hydroxylation of steroids. Required for the adrenal synthesis of mineralocorticoids and glucocorticoids.</text>
</comment>
<comment type="catalytic activity">
    <reaction evidence="1">
        <text>17alpha-hydroxyprogesterone + reduced [NADPH--hemoprotein reductase] + O2 = 11-deoxycortisol + oxidized [NADPH--hemoprotein reductase] + H2O + H(+)</text>
        <dbReference type="Rhea" id="RHEA:50308"/>
        <dbReference type="Rhea" id="RHEA-COMP:11964"/>
        <dbReference type="Rhea" id="RHEA-COMP:11965"/>
        <dbReference type="ChEBI" id="CHEBI:15377"/>
        <dbReference type="ChEBI" id="CHEBI:15378"/>
        <dbReference type="ChEBI" id="CHEBI:15379"/>
        <dbReference type="ChEBI" id="CHEBI:17252"/>
        <dbReference type="ChEBI" id="CHEBI:28324"/>
        <dbReference type="ChEBI" id="CHEBI:57618"/>
        <dbReference type="ChEBI" id="CHEBI:58210"/>
        <dbReference type="EC" id="1.14.14.16"/>
    </reaction>
</comment>
<comment type="catalytic activity">
    <reaction evidence="1">
        <text>progesterone + reduced [NADPH--hemoprotein reductase] + O2 = 21-hydroxyprogesterone + oxidized [NADPH--hemoprotein reductase] + H2O + H(+)</text>
        <dbReference type="Rhea" id="RHEA:50304"/>
        <dbReference type="Rhea" id="RHEA-COMP:11964"/>
        <dbReference type="Rhea" id="RHEA-COMP:11965"/>
        <dbReference type="ChEBI" id="CHEBI:15377"/>
        <dbReference type="ChEBI" id="CHEBI:15378"/>
        <dbReference type="ChEBI" id="CHEBI:15379"/>
        <dbReference type="ChEBI" id="CHEBI:16973"/>
        <dbReference type="ChEBI" id="CHEBI:17026"/>
        <dbReference type="ChEBI" id="CHEBI:57618"/>
        <dbReference type="ChEBI" id="CHEBI:58210"/>
        <dbReference type="EC" id="1.14.14.16"/>
    </reaction>
</comment>
<comment type="cofactor">
    <cofactor evidence="1">
        <name>heme b</name>
        <dbReference type="ChEBI" id="CHEBI:60344"/>
    </cofactor>
</comment>
<comment type="subcellular location">
    <subcellularLocation>
        <location>Endoplasmic reticulum membrane</location>
        <topology>Peripheral membrane protein</topology>
    </subcellularLocation>
    <subcellularLocation>
        <location>Microsome membrane</location>
        <topology>Peripheral membrane protein</topology>
    </subcellularLocation>
</comment>
<comment type="domain">
    <text>The leucine-rich hydrophobic amino acid N-terminal region probably helps to anchor the protein to the microsomal membrane.</text>
</comment>
<comment type="similarity">
    <text evidence="3">Belongs to the cytochrome P450 family.</text>
</comment>
<feature type="chain" id="PRO_0000051975" description="Steroid 21-hydroxylase">
    <location>
        <begin position="1"/>
        <end position="492"/>
    </location>
</feature>
<feature type="binding site" evidence="2">
    <location>
        <position position="91"/>
    </location>
    <ligand>
        <name>heme b</name>
        <dbReference type="ChEBI" id="CHEBI:60344"/>
    </ligand>
</feature>
<feature type="binding site" evidence="2">
    <location>
        <position position="120"/>
    </location>
    <ligand>
        <name>heme b</name>
        <dbReference type="ChEBI" id="CHEBI:60344"/>
    </ligand>
</feature>
<feature type="binding site" evidence="1">
    <location>
        <position position="231"/>
    </location>
    <ligand>
        <name>17alpha-hydroxyprogesterone</name>
        <dbReference type="ChEBI" id="CHEBI:17252"/>
    </ligand>
</feature>
<feature type="binding site" evidence="2">
    <location>
        <position position="231"/>
    </location>
    <ligand>
        <name>progesterone</name>
        <dbReference type="ChEBI" id="CHEBI:17026"/>
    </ligand>
</feature>
<feature type="binding site" evidence="2">
    <location>
        <position position="363"/>
    </location>
    <ligand>
        <name>heme b</name>
        <dbReference type="ChEBI" id="CHEBI:60344"/>
    </ligand>
</feature>
<feature type="binding site" evidence="2">
    <location>
        <position position="424"/>
    </location>
    <ligand>
        <name>heme b</name>
        <dbReference type="ChEBI" id="CHEBI:60344"/>
    </ligand>
</feature>
<feature type="binding site" description="axial binding residue" evidence="2">
    <location>
        <position position="426"/>
    </location>
    <ligand>
        <name>heme b</name>
        <dbReference type="ChEBI" id="CHEBI:60344"/>
    </ligand>
    <ligandPart>
        <name>Fe</name>
        <dbReference type="ChEBI" id="CHEBI:18248"/>
    </ligandPart>
</feature>
<name>CP21A_CANLF</name>
<sequence length="492" mass="55366">MLLLGVLLLTVLAGARLLWGKWKLRGLHLPPLVPGCLHLLQPDLPLHLLGLTQKLGPIYRLRLGLQDVVVLNSKRTIEEAMVRKWVDFAGRPQTPSYKLVSLHHQDLSLGDYSLLWKAHKKLTRSALLLGIRSSMEPLVEQLTQEFCERMRAQAGTPVAIQKEFSLLTCAIICHLTFGDKEDTLVHTFHDCVQDLMRTWEHWSIQMLDIIPFLRFFPNPGLWRLKRALENRDHIVEKQLRQHKESMVAGQWRDMTDYMLQRVGRLRAEEGCGQLLEGHVHMSVVDLFIGGTETTATTLSWAVAFLLHHPEIQQRLQEELDRELGPGASGSRIPYRDPTRLPLLSATVAEVLRLRPVVPLALPHCTTRPSSISGYDIPEGMVVIPNLQGAHLDETVWERPQEFRPDRFLVPGASPRVLAFGCGARVCLGEPLARLELLVVLAQLLRAFTLMPAAGTLPSLRPRARCGVNLSMQPFQVQLQPRGAGVLGRGQHP</sequence>
<accession>Q8WNW0</accession>
<dbReference type="EC" id="1.14.14.16" evidence="1"/>
<dbReference type="EMBL" id="AB052905">
    <property type="protein sequence ID" value="BAB79541.1"/>
    <property type="molecule type" value="Genomic_DNA"/>
</dbReference>
<dbReference type="SMR" id="Q8WNW0"/>
<dbReference type="FunCoup" id="Q8WNW0">
    <property type="interactions" value="27"/>
</dbReference>
<dbReference type="STRING" id="9615.ENSCAFP00000001018"/>
<dbReference type="PaxDb" id="9612-ENSCAFP00000001018"/>
<dbReference type="eggNOG" id="KOG0156">
    <property type="taxonomic scope" value="Eukaryota"/>
</dbReference>
<dbReference type="HOGENOM" id="CLU_001570_22_0_1"/>
<dbReference type="InParanoid" id="Q8WNW0"/>
<dbReference type="OMA" id="RICVHEM"/>
<dbReference type="TreeFam" id="TF105095"/>
<dbReference type="Proteomes" id="UP000002254">
    <property type="component" value="Unplaced"/>
</dbReference>
<dbReference type="Proteomes" id="UP000694429">
    <property type="component" value="Unplaced"/>
</dbReference>
<dbReference type="Proteomes" id="UP000694542">
    <property type="component" value="Unplaced"/>
</dbReference>
<dbReference type="Proteomes" id="UP000805418">
    <property type="component" value="Unplaced"/>
</dbReference>
<dbReference type="GO" id="GO:0005737">
    <property type="term" value="C:cytoplasm"/>
    <property type="evidence" value="ECO:0000318"/>
    <property type="project" value="GO_Central"/>
</dbReference>
<dbReference type="GO" id="GO:0005789">
    <property type="term" value="C:endoplasmic reticulum membrane"/>
    <property type="evidence" value="ECO:0007669"/>
    <property type="project" value="UniProtKB-SubCell"/>
</dbReference>
<dbReference type="GO" id="GO:0043231">
    <property type="term" value="C:intracellular membrane-bounded organelle"/>
    <property type="evidence" value="ECO:0000318"/>
    <property type="project" value="GO_Central"/>
</dbReference>
<dbReference type="GO" id="GO:0103069">
    <property type="term" value="F:17-hydroxyprogesterone 21-hydroxylase activity"/>
    <property type="evidence" value="ECO:0007669"/>
    <property type="project" value="RHEA"/>
</dbReference>
<dbReference type="GO" id="GO:0020037">
    <property type="term" value="F:heme binding"/>
    <property type="evidence" value="ECO:0000318"/>
    <property type="project" value="GO_Central"/>
</dbReference>
<dbReference type="GO" id="GO:0005506">
    <property type="term" value="F:iron ion binding"/>
    <property type="evidence" value="ECO:0007669"/>
    <property type="project" value="InterPro"/>
</dbReference>
<dbReference type="GO" id="GO:0016712">
    <property type="term" value="F:oxidoreductase activity, acting on paired donors, with incorporation or reduction of molecular oxygen, reduced flavin or flavoprotein as one donor, and incorporation of one atom of oxygen"/>
    <property type="evidence" value="ECO:0000318"/>
    <property type="project" value="GO_Central"/>
</dbReference>
<dbReference type="GO" id="GO:0106309">
    <property type="term" value="F:progesterone 21-hydroxylase activity"/>
    <property type="evidence" value="ECO:0007669"/>
    <property type="project" value="RHEA"/>
</dbReference>
<dbReference type="GO" id="GO:0005496">
    <property type="term" value="F:steroid binding"/>
    <property type="evidence" value="ECO:0007669"/>
    <property type="project" value="UniProtKB-KW"/>
</dbReference>
<dbReference type="GO" id="GO:0008395">
    <property type="term" value="F:steroid hydroxylase activity"/>
    <property type="evidence" value="ECO:0000250"/>
    <property type="project" value="UniProtKB"/>
</dbReference>
<dbReference type="GO" id="GO:0006082">
    <property type="term" value="P:organic acid metabolic process"/>
    <property type="evidence" value="ECO:0000318"/>
    <property type="project" value="GO_Central"/>
</dbReference>
<dbReference type="GO" id="GO:0006694">
    <property type="term" value="P:steroid biosynthetic process"/>
    <property type="evidence" value="ECO:0007669"/>
    <property type="project" value="UniProtKB-KW"/>
</dbReference>
<dbReference type="GO" id="GO:0008202">
    <property type="term" value="P:steroid metabolic process"/>
    <property type="evidence" value="ECO:0000250"/>
    <property type="project" value="UniProtKB"/>
</dbReference>
<dbReference type="GO" id="GO:0006805">
    <property type="term" value="P:xenobiotic metabolic process"/>
    <property type="evidence" value="ECO:0000318"/>
    <property type="project" value="GO_Central"/>
</dbReference>
<dbReference type="CDD" id="cd20674">
    <property type="entry name" value="CYP21"/>
    <property type="match status" value="1"/>
</dbReference>
<dbReference type="FunFam" id="1.10.630.10:FF:000049">
    <property type="entry name" value="steroid 21-hydroxylase isoform X1"/>
    <property type="match status" value="1"/>
</dbReference>
<dbReference type="Gene3D" id="1.10.630.10">
    <property type="entry name" value="Cytochrome P450"/>
    <property type="match status" value="1"/>
</dbReference>
<dbReference type="InterPro" id="IPR001128">
    <property type="entry name" value="Cyt_P450"/>
</dbReference>
<dbReference type="InterPro" id="IPR017972">
    <property type="entry name" value="Cyt_P450_CS"/>
</dbReference>
<dbReference type="InterPro" id="IPR002401">
    <property type="entry name" value="Cyt_P450_E_grp-I"/>
</dbReference>
<dbReference type="InterPro" id="IPR036396">
    <property type="entry name" value="Cyt_P450_sf"/>
</dbReference>
<dbReference type="PANTHER" id="PTHR24289">
    <property type="entry name" value="STEROID 17-ALPHA-HYDROXYLASE/17,20 LYASE"/>
    <property type="match status" value="1"/>
</dbReference>
<dbReference type="PANTHER" id="PTHR24289:SF17">
    <property type="entry name" value="STEROID 21-HYDROXYLASE ISOFORM X1"/>
    <property type="match status" value="1"/>
</dbReference>
<dbReference type="Pfam" id="PF00067">
    <property type="entry name" value="p450"/>
    <property type="match status" value="1"/>
</dbReference>
<dbReference type="PRINTS" id="PR00463">
    <property type="entry name" value="EP450I"/>
</dbReference>
<dbReference type="PRINTS" id="PR00385">
    <property type="entry name" value="P450"/>
</dbReference>
<dbReference type="SUPFAM" id="SSF48264">
    <property type="entry name" value="Cytochrome P450"/>
    <property type="match status" value="1"/>
</dbReference>
<dbReference type="PROSITE" id="PS00086">
    <property type="entry name" value="CYTOCHROME_P450"/>
    <property type="match status" value="1"/>
</dbReference>
<keyword id="KW-0256">Endoplasmic reticulum</keyword>
<keyword id="KW-0349">Heme</keyword>
<keyword id="KW-0408">Iron</keyword>
<keyword id="KW-0446">Lipid-binding</keyword>
<keyword id="KW-0472">Membrane</keyword>
<keyword id="KW-0479">Metal-binding</keyword>
<keyword id="KW-0492">Microsome</keyword>
<keyword id="KW-0503">Monooxygenase</keyword>
<keyword id="KW-0560">Oxidoreductase</keyword>
<keyword id="KW-1185">Reference proteome</keyword>
<keyword id="KW-0754">Steroid-binding</keyword>
<keyword id="KW-0755">Steroidogenesis</keyword>
<gene>
    <name type="primary">CYP21</name>
</gene>
<evidence type="ECO:0000250" key="1">
    <source>
        <dbReference type="UniProtKB" id="P00191"/>
    </source>
</evidence>
<evidence type="ECO:0000250" key="2">
    <source>
        <dbReference type="UniProtKB" id="P08686"/>
    </source>
</evidence>
<evidence type="ECO:0000305" key="3"/>
<proteinExistence type="inferred from homology"/>
<organism>
    <name type="scientific">Canis lupus familiaris</name>
    <name type="common">Dog</name>
    <name type="synonym">Canis familiaris</name>
    <dbReference type="NCBI Taxonomy" id="9615"/>
    <lineage>
        <taxon>Eukaryota</taxon>
        <taxon>Metazoa</taxon>
        <taxon>Chordata</taxon>
        <taxon>Craniata</taxon>
        <taxon>Vertebrata</taxon>
        <taxon>Euteleostomi</taxon>
        <taxon>Mammalia</taxon>
        <taxon>Eutheria</taxon>
        <taxon>Laurasiatheria</taxon>
        <taxon>Carnivora</taxon>
        <taxon>Caniformia</taxon>
        <taxon>Canidae</taxon>
        <taxon>Canis</taxon>
    </lineage>
</organism>
<reference key="1">
    <citation type="journal article" date="2002" name="Res. Vet. Sci.">
        <title>Cloning of canine 21-hydroxylase gene and its polymorphic analysis as a candidate gene for congenital adrenal hyperplasia-like syndrome in Pomeranians.</title>
        <authorList>
            <person name="Takada K."/>
            <person name="Kitamura H."/>
            <person name="Takiguchi M."/>
            <person name="Saito M."/>
            <person name="Hashimoto A."/>
        </authorList>
    </citation>
    <scope>NUCLEOTIDE SEQUENCE [GENOMIC DNA]</scope>
    <source>
        <strain>Beagle</strain>
        <tissue>Adrenal gland</tissue>
    </source>
</reference>